<dbReference type="EC" id="6.1.1.6" evidence="1"/>
<dbReference type="EMBL" id="AE016823">
    <property type="protein sequence ID" value="AAS70496.1"/>
    <property type="molecule type" value="Genomic_DNA"/>
</dbReference>
<dbReference type="RefSeq" id="WP_000004519.1">
    <property type="nucleotide sequence ID" value="NC_005823.1"/>
</dbReference>
<dbReference type="SMR" id="Q72R38"/>
<dbReference type="GeneID" id="61141808"/>
<dbReference type="KEGG" id="lic:LIC_11913"/>
<dbReference type="HOGENOM" id="CLU_008255_6_0_12"/>
<dbReference type="Proteomes" id="UP000007037">
    <property type="component" value="Chromosome I"/>
</dbReference>
<dbReference type="GO" id="GO:0005829">
    <property type="term" value="C:cytosol"/>
    <property type="evidence" value="ECO:0007669"/>
    <property type="project" value="TreeGrafter"/>
</dbReference>
<dbReference type="GO" id="GO:0005524">
    <property type="term" value="F:ATP binding"/>
    <property type="evidence" value="ECO:0007669"/>
    <property type="project" value="UniProtKB-UniRule"/>
</dbReference>
<dbReference type="GO" id="GO:0004824">
    <property type="term" value="F:lysine-tRNA ligase activity"/>
    <property type="evidence" value="ECO:0007669"/>
    <property type="project" value="UniProtKB-UniRule"/>
</dbReference>
<dbReference type="GO" id="GO:0000287">
    <property type="term" value="F:magnesium ion binding"/>
    <property type="evidence" value="ECO:0007669"/>
    <property type="project" value="UniProtKB-UniRule"/>
</dbReference>
<dbReference type="GO" id="GO:0000049">
    <property type="term" value="F:tRNA binding"/>
    <property type="evidence" value="ECO:0007669"/>
    <property type="project" value="TreeGrafter"/>
</dbReference>
<dbReference type="GO" id="GO:0006430">
    <property type="term" value="P:lysyl-tRNA aminoacylation"/>
    <property type="evidence" value="ECO:0007669"/>
    <property type="project" value="UniProtKB-UniRule"/>
</dbReference>
<dbReference type="CDD" id="cd00775">
    <property type="entry name" value="LysRS_core"/>
    <property type="match status" value="1"/>
</dbReference>
<dbReference type="CDD" id="cd04322">
    <property type="entry name" value="LysRS_N"/>
    <property type="match status" value="1"/>
</dbReference>
<dbReference type="FunFam" id="2.40.50.140:FF:000024">
    <property type="entry name" value="Lysine--tRNA ligase"/>
    <property type="match status" value="1"/>
</dbReference>
<dbReference type="FunFam" id="3.30.930.10:FF:000001">
    <property type="entry name" value="Lysine--tRNA ligase"/>
    <property type="match status" value="1"/>
</dbReference>
<dbReference type="Gene3D" id="3.30.930.10">
    <property type="entry name" value="Bira Bifunctional Protein, Domain 2"/>
    <property type="match status" value="1"/>
</dbReference>
<dbReference type="Gene3D" id="2.40.50.140">
    <property type="entry name" value="Nucleic acid-binding proteins"/>
    <property type="match status" value="1"/>
</dbReference>
<dbReference type="HAMAP" id="MF_00252">
    <property type="entry name" value="Lys_tRNA_synth_class2"/>
    <property type="match status" value="1"/>
</dbReference>
<dbReference type="InterPro" id="IPR004364">
    <property type="entry name" value="Aa-tRNA-synt_II"/>
</dbReference>
<dbReference type="InterPro" id="IPR006195">
    <property type="entry name" value="aa-tRNA-synth_II"/>
</dbReference>
<dbReference type="InterPro" id="IPR045864">
    <property type="entry name" value="aa-tRNA-synth_II/BPL/LPL"/>
</dbReference>
<dbReference type="InterPro" id="IPR002313">
    <property type="entry name" value="Lys-tRNA-ligase_II"/>
</dbReference>
<dbReference type="InterPro" id="IPR034762">
    <property type="entry name" value="Lys-tRNA-ligase_II_bac/euk"/>
</dbReference>
<dbReference type="InterPro" id="IPR044136">
    <property type="entry name" value="Lys-tRNA-ligase_II_N"/>
</dbReference>
<dbReference type="InterPro" id="IPR018149">
    <property type="entry name" value="Lys-tRNA-synth_II_C"/>
</dbReference>
<dbReference type="InterPro" id="IPR012340">
    <property type="entry name" value="NA-bd_OB-fold"/>
</dbReference>
<dbReference type="InterPro" id="IPR004365">
    <property type="entry name" value="NA-bd_OB_tRNA"/>
</dbReference>
<dbReference type="NCBIfam" id="TIGR00499">
    <property type="entry name" value="lysS_bact"/>
    <property type="match status" value="1"/>
</dbReference>
<dbReference type="NCBIfam" id="NF001756">
    <property type="entry name" value="PRK00484.1"/>
    <property type="match status" value="1"/>
</dbReference>
<dbReference type="PANTHER" id="PTHR42918:SF15">
    <property type="entry name" value="LYSINE--TRNA LIGASE, CHLOROPLASTIC_MITOCHONDRIAL"/>
    <property type="match status" value="1"/>
</dbReference>
<dbReference type="PANTHER" id="PTHR42918">
    <property type="entry name" value="LYSYL-TRNA SYNTHETASE"/>
    <property type="match status" value="1"/>
</dbReference>
<dbReference type="Pfam" id="PF00152">
    <property type="entry name" value="tRNA-synt_2"/>
    <property type="match status" value="1"/>
</dbReference>
<dbReference type="Pfam" id="PF01336">
    <property type="entry name" value="tRNA_anti-codon"/>
    <property type="match status" value="1"/>
</dbReference>
<dbReference type="PIRSF" id="PIRSF039101">
    <property type="entry name" value="LysRS2"/>
    <property type="match status" value="1"/>
</dbReference>
<dbReference type="PRINTS" id="PR00982">
    <property type="entry name" value="TRNASYNTHLYS"/>
</dbReference>
<dbReference type="SUPFAM" id="SSF55681">
    <property type="entry name" value="Class II aaRS and biotin synthetases"/>
    <property type="match status" value="1"/>
</dbReference>
<dbReference type="SUPFAM" id="SSF50249">
    <property type="entry name" value="Nucleic acid-binding proteins"/>
    <property type="match status" value="1"/>
</dbReference>
<dbReference type="PROSITE" id="PS50862">
    <property type="entry name" value="AA_TRNA_LIGASE_II"/>
    <property type="match status" value="1"/>
</dbReference>
<proteinExistence type="inferred from homology"/>
<evidence type="ECO:0000255" key="1">
    <source>
        <dbReference type="HAMAP-Rule" id="MF_00252"/>
    </source>
</evidence>
<feature type="chain" id="PRO_0000152640" description="Lysine--tRNA ligase">
    <location>
        <begin position="1"/>
        <end position="495"/>
    </location>
</feature>
<feature type="binding site" evidence="1">
    <location>
        <position position="406"/>
    </location>
    <ligand>
        <name>Mg(2+)</name>
        <dbReference type="ChEBI" id="CHEBI:18420"/>
        <label>1</label>
    </ligand>
</feature>
<feature type="binding site" evidence="1">
    <location>
        <position position="413"/>
    </location>
    <ligand>
        <name>Mg(2+)</name>
        <dbReference type="ChEBI" id="CHEBI:18420"/>
        <label>1</label>
    </ligand>
</feature>
<feature type="binding site" evidence="1">
    <location>
        <position position="413"/>
    </location>
    <ligand>
        <name>Mg(2+)</name>
        <dbReference type="ChEBI" id="CHEBI:18420"/>
        <label>2</label>
    </ligand>
</feature>
<keyword id="KW-0030">Aminoacyl-tRNA synthetase</keyword>
<keyword id="KW-0067">ATP-binding</keyword>
<keyword id="KW-0963">Cytoplasm</keyword>
<keyword id="KW-0436">Ligase</keyword>
<keyword id="KW-0460">Magnesium</keyword>
<keyword id="KW-0479">Metal-binding</keyword>
<keyword id="KW-0547">Nucleotide-binding</keyword>
<keyword id="KW-0648">Protein biosynthesis</keyword>
<comment type="catalytic activity">
    <reaction evidence="1">
        <text>tRNA(Lys) + L-lysine + ATP = L-lysyl-tRNA(Lys) + AMP + diphosphate</text>
        <dbReference type="Rhea" id="RHEA:20792"/>
        <dbReference type="Rhea" id="RHEA-COMP:9696"/>
        <dbReference type="Rhea" id="RHEA-COMP:9697"/>
        <dbReference type="ChEBI" id="CHEBI:30616"/>
        <dbReference type="ChEBI" id="CHEBI:32551"/>
        <dbReference type="ChEBI" id="CHEBI:33019"/>
        <dbReference type="ChEBI" id="CHEBI:78442"/>
        <dbReference type="ChEBI" id="CHEBI:78529"/>
        <dbReference type="ChEBI" id="CHEBI:456215"/>
        <dbReference type="EC" id="6.1.1.6"/>
    </reaction>
</comment>
<comment type="cofactor">
    <cofactor evidence="1">
        <name>Mg(2+)</name>
        <dbReference type="ChEBI" id="CHEBI:18420"/>
    </cofactor>
    <text evidence="1">Binds 3 Mg(2+) ions per subunit.</text>
</comment>
<comment type="subunit">
    <text evidence="1">Homodimer.</text>
</comment>
<comment type="subcellular location">
    <subcellularLocation>
        <location evidence="1">Cytoplasm</location>
    </subcellularLocation>
</comment>
<comment type="similarity">
    <text evidence="1">Belongs to the class-II aminoacyl-tRNA synthetase family.</text>
</comment>
<protein>
    <recommendedName>
        <fullName evidence="1">Lysine--tRNA ligase</fullName>
        <ecNumber evidence="1">6.1.1.6</ecNumber>
    </recommendedName>
    <alternativeName>
        <fullName evidence="1">Lysyl-tRNA synthetase</fullName>
        <shortName evidence="1">LysRS</shortName>
    </alternativeName>
</protein>
<gene>
    <name evidence="1" type="primary">lysS</name>
    <name type="ordered locus">LIC_11913</name>
</gene>
<accession>Q72R38</accession>
<name>SYK_LEPIC</name>
<organism>
    <name type="scientific">Leptospira interrogans serogroup Icterohaemorrhagiae serovar copenhageni (strain Fiocruz L1-130)</name>
    <dbReference type="NCBI Taxonomy" id="267671"/>
    <lineage>
        <taxon>Bacteria</taxon>
        <taxon>Pseudomonadati</taxon>
        <taxon>Spirochaetota</taxon>
        <taxon>Spirochaetia</taxon>
        <taxon>Leptospirales</taxon>
        <taxon>Leptospiraceae</taxon>
        <taxon>Leptospira</taxon>
    </lineage>
</organism>
<reference key="1">
    <citation type="journal article" date="2004" name="J. Bacteriol.">
        <title>Comparative genomics of two Leptospira interrogans serovars reveals novel insights into physiology and pathogenesis.</title>
        <authorList>
            <person name="Nascimento A.L.T.O."/>
            <person name="Ko A.I."/>
            <person name="Martins E.A.L."/>
            <person name="Monteiro-Vitorello C.B."/>
            <person name="Ho P.L."/>
            <person name="Haake D.A."/>
            <person name="Verjovski-Almeida S."/>
            <person name="Hartskeerl R.A."/>
            <person name="Marques M.V."/>
            <person name="Oliveira M.C."/>
            <person name="Menck C.F.M."/>
            <person name="Leite L.C.C."/>
            <person name="Carrer H."/>
            <person name="Coutinho L.L."/>
            <person name="Degrave W.M."/>
            <person name="Dellagostin O.A."/>
            <person name="El-Dorry H."/>
            <person name="Ferro E.S."/>
            <person name="Ferro M.I.T."/>
            <person name="Furlan L.R."/>
            <person name="Gamberini M."/>
            <person name="Giglioti E.A."/>
            <person name="Goes-Neto A."/>
            <person name="Goldman G.H."/>
            <person name="Goldman M.H.S."/>
            <person name="Harakava R."/>
            <person name="Jeronimo S.M.B."/>
            <person name="Junqueira-de-Azevedo I.L.M."/>
            <person name="Kimura E.T."/>
            <person name="Kuramae E.E."/>
            <person name="Lemos E.G.M."/>
            <person name="Lemos M.V.F."/>
            <person name="Marino C.L."/>
            <person name="Nunes L.R."/>
            <person name="de Oliveira R.C."/>
            <person name="Pereira G.G."/>
            <person name="Reis M.S."/>
            <person name="Schriefer A."/>
            <person name="Siqueira W.J."/>
            <person name="Sommer P."/>
            <person name="Tsai S.M."/>
            <person name="Simpson A.J.G."/>
            <person name="Ferro J.A."/>
            <person name="Camargo L.E.A."/>
            <person name="Kitajima J.P."/>
            <person name="Setubal J.C."/>
            <person name="Van Sluys M.A."/>
        </authorList>
    </citation>
    <scope>NUCLEOTIDE SEQUENCE [LARGE SCALE GENOMIC DNA]</scope>
    <source>
        <strain>Fiocruz L1-130</strain>
    </source>
</reference>
<sequence>MSESNELIEQRIQKIEELKKQGINPYPVRFFPDSKSKDIAEKFEKNPTGPETKFKLGGRLHSKRVMGKASFAHLKDNSGIIQLYATKDDLGETQYSIFKSLDLGDIIGLEGYLFKTQKGEITLHVTSVELLSKCIRPLPVVKEKDGVVYDAFADVEQRYRMRYVDLIVNDHVRDTFITRSKIVSEIRSFLTQEGFLEVETPMMQPIAGGAAARPFVTHHNTLDMQLFLRIAPELYLKRLIVGGMDRVFELNRNFRNEGISTKHNPEFTMMEAYMAFGDMSTMLDLTERLITHLAQKICGTLKIQYGKDLIDLSPPWKRTTYVDIIKEYSGIDFSQIISLEEAKKKASELKVDVSKCQTIWKVADEVFSEKAEPNLIQPIFITDYPKELSPLAKSNPDKPGYVERFEPYVAGREIGNAFTELNDPFDQKERFEDQVKQREAGDDEAFMMDEDYIRALEYGMPPTGGLGIGIDRLVMLLTNSHSIRDTILFPLMRPE</sequence>